<reference key="1">
    <citation type="journal article" date="2009" name="BMC Genomics">
        <title>Metabolic analysis of the soil microbe Dechloromonas aromatica str. RCB: indications of a surprisingly complex life-style and cryptic anaerobic pathways for aromatic degradation.</title>
        <authorList>
            <person name="Salinero K.K."/>
            <person name="Keller K."/>
            <person name="Feil W.S."/>
            <person name="Feil H."/>
            <person name="Trong S."/>
            <person name="Di Bartolo G."/>
            <person name="Lapidus A."/>
        </authorList>
    </citation>
    <scope>NUCLEOTIDE SEQUENCE [LARGE SCALE GENOMIC DNA]</scope>
    <source>
        <strain>RCB</strain>
    </source>
</reference>
<evidence type="ECO:0000255" key="1">
    <source>
        <dbReference type="HAMAP-Rule" id="MF_00331"/>
    </source>
</evidence>
<comment type="function">
    <text evidence="1">Master enzyme that delivers sulfur to a number of partners involved in Fe-S cluster assembly, tRNA modification or cofactor biosynthesis. Catalyzes the removal of elemental sulfur atoms from cysteine to produce alanine. Functions as a sulfur delivery protein for Fe-S cluster synthesis onto IscU, an Fe-S scaffold assembly protein, as well as other S acceptor proteins.</text>
</comment>
<comment type="catalytic activity">
    <reaction evidence="1">
        <text>(sulfur carrier)-H + L-cysteine = (sulfur carrier)-SH + L-alanine</text>
        <dbReference type="Rhea" id="RHEA:43892"/>
        <dbReference type="Rhea" id="RHEA-COMP:14737"/>
        <dbReference type="Rhea" id="RHEA-COMP:14739"/>
        <dbReference type="ChEBI" id="CHEBI:29917"/>
        <dbReference type="ChEBI" id="CHEBI:35235"/>
        <dbReference type="ChEBI" id="CHEBI:57972"/>
        <dbReference type="ChEBI" id="CHEBI:64428"/>
        <dbReference type="EC" id="2.8.1.7"/>
    </reaction>
</comment>
<comment type="cofactor">
    <cofactor evidence="1">
        <name>pyridoxal 5'-phosphate</name>
        <dbReference type="ChEBI" id="CHEBI:597326"/>
    </cofactor>
</comment>
<comment type="pathway">
    <text evidence="1">Cofactor biosynthesis; iron-sulfur cluster biosynthesis.</text>
</comment>
<comment type="subunit">
    <text evidence="1">Homodimer. Forms a heterotetramer with IscU, interacts with other sulfur acceptors.</text>
</comment>
<comment type="subcellular location">
    <subcellularLocation>
        <location evidence="1">Cytoplasm</location>
    </subcellularLocation>
</comment>
<comment type="similarity">
    <text evidence="1">Belongs to the class-V pyridoxal-phosphate-dependent aminotransferase family. NifS/IscS subfamily.</text>
</comment>
<protein>
    <recommendedName>
        <fullName evidence="1">Cysteine desulfurase IscS</fullName>
        <ecNumber evidence="1">2.8.1.7</ecNumber>
    </recommendedName>
</protein>
<organism>
    <name type="scientific">Dechloromonas aromatica (strain RCB)</name>
    <dbReference type="NCBI Taxonomy" id="159087"/>
    <lineage>
        <taxon>Bacteria</taxon>
        <taxon>Pseudomonadati</taxon>
        <taxon>Pseudomonadota</taxon>
        <taxon>Betaproteobacteria</taxon>
        <taxon>Rhodocyclales</taxon>
        <taxon>Azonexaceae</taxon>
        <taxon>Dechloromonas</taxon>
    </lineage>
</organism>
<gene>
    <name evidence="1" type="primary">iscS</name>
    <name type="ordered locus">Daro_1950</name>
</gene>
<sequence>MTMKLPIYLDYSATTPVDPRVAEKMIPYLCEHFGNPASRSHSFGWVADAAVEEAREQVAALVNADPKEIVWTSGATESNNLAIKGAANFYASTKGKHIITVKTEHKAILDTVREMERQGFEATYLDVKEDGLLDLEVFKAAIRPDTVLASVMFVNNEVGVIQPIAELGEICREKGIIFHVDAAQATGKVDIDLSKLKVDLMSFCAHKTYGPKGIGALYVRRKPRIRLEAQMHGGGHERGFRSGTLPTHQIVGMGECFRLAKEEMAEENKRVGALRDKLLKGLQDIEATFVNGDLTQRVAHNLNISFAYVEGESMIMAIKDLAVSSGSACTSASLEPSYVLRALGRDDELAHSSIRFSIGRFTTEEEIDYAIKLLHQKVGKLRELSPLWEMYKDGIDLSTVQWAAH</sequence>
<keyword id="KW-0001">2Fe-2S</keyword>
<keyword id="KW-0963">Cytoplasm</keyword>
<keyword id="KW-0408">Iron</keyword>
<keyword id="KW-0411">Iron-sulfur</keyword>
<keyword id="KW-0479">Metal-binding</keyword>
<keyword id="KW-0663">Pyridoxal phosphate</keyword>
<keyword id="KW-0808">Transferase</keyword>
<accession>Q47EN5</accession>
<dbReference type="EC" id="2.8.1.7" evidence="1"/>
<dbReference type="EMBL" id="CP000089">
    <property type="protein sequence ID" value="AAZ46696.1"/>
    <property type="molecule type" value="Genomic_DNA"/>
</dbReference>
<dbReference type="SMR" id="Q47EN5"/>
<dbReference type="STRING" id="159087.Daro_1950"/>
<dbReference type="KEGG" id="dar:Daro_1950"/>
<dbReference type="eggNOG" id="COG1104">
    <property type="taxonomic scope" value="Bacteria"/>
</dbReference>
<dbReference type="HOGENOM" id="CLU_003433_0_2_4"/>
<dbReference type="UniPathway" id="UPA00266"/>
<dbReference type="GO" id="GO:1990221">
    <property type="term" value="C:L-cysteine desulfurase complex"/>
    <property type="evidence" value="ECO:0007669"/>
    <property type="project" value="UniProtKB-ARBA"/>
</dbReference>
<dbReference type="GO" id="GO:0051537">
    <property type="term" value="F:2 iron, 2 sulfur cluster binding"/>
    <property type="evidence" value="ECO:0007669"/>
    <property type="project" value="UniProtKB-UniRule"/>
</dbReference>
<dbReference type="GO" id="GO:0031071">
    <property type="term" value="F:cysteine desulfurase activity"/>
    <property type="evidence" value="ECO:0007669"/>
    <property type="project" value="UniProtKB-UniRule"/>
</dbReference>
<dbReference type="GO" id="GO:0046872">
    <property type="term" value="F:metal ion binding"/>
    <property type="evidence" value="ECO:0007669"/>
    <property type="project" value="UniProtKB-KW"/>
</dbReference>
<dbReference type="GO" id="GO:0030170">
    <property type="term" value="F:pyridoxal phosphate binding"/>
    <property type="evidence" value="ECO:0007669"/>
    <property type="project" value="UniProtKB-UniRule"/>
</dbReference>
<dbReference type="GO" id="GO:0044571">
    <property type="term" value="P:[2Fe-2S] cluster assembly"/>
    <property type="evidence" value="ECO:0007669"/>
    <property type="project" value="UniProtKB-UniRule"/>
</dbReference>
<dbReference type="FunFam" id="3.40.640.10:FF:000003">
    <property type="entry name" value="Cysteine desulfurase IscS"/>
    <property type="match status" value="1"/>
</dbReference>
<dbReference type="FunFam" id="3.90.1150.10:FF:000002">
    <property type="entry name" value="Cysteine desulfurase IscS"/>
    <property type="match status" value="1"/>
</dbReference>
<dbReference type="Gene3D" id="3.90.1150.10">
    <property type="entry name" value="Aspartate Aminotransferase, domain 1"/>
    <property type="match status" value="1"/>
</dbReference>
<dbReference type="Gene3D" id="3.40.640.10">
    <property type="entry name" value="Type I PLP-dependent aspartate aminotransferase-like (Major domain)"/>
    <property type="match status" value="1"/>
</dbReference>
<dbReference type="HAMAP" id="MF_00331">
    <property type="entry name" value="Cys_desulf_IscS"/>
    <property type="match status" value="1"/>
</dbReference>
<dbReference type="InterPro" id="IPR000192">
    <property type="entry name" value="Aminotrans_V_dom"/>
</dbReference>
<dbReference type="InterPro" id="IPR020578">
    <property type="entry name" value="Aminotrans_V_PyrdxlP_BS"/>
</dbReference>
<dbReference type="InterPro" id="IPR010240">
    <property type="entry name" value="Cys_deSase_IscS"/>
</dbReference>
<dbReference type="InterPro" id="IPR016454">
    <property type="entry name" value="Cysteine_dSase"/>
</dbReference>
<dbReference type="InterPro" id="IPR015424">
    <property type="entry name" value="PyrdxlP-dep_Trfase"/>
</dbReference>
<dbReference type="InterPro" id="IPR015421">
    <property type="entry name" value="PyrdxlP-dep_Trfase_major"/>
</dbReference>
<dbReference type="InterPro" id="IPR015422">
    <property type="entry name" value="PyrdxlP-dep_Trfase_small"/>
</dbReference>
<dbReference type="NCBIfam" id="TIGR02006">
    <property type="entry name" value="IscS"/>
    <property type="match status" value="1"/>
</dbReference>
<dbReference type="NCBIfam" id="NF010611">
    <property type="entry name" value="PRK14012.1"/>
    <property type="match status" value="1"/>
</dbReference>
<dbReference type="PANTHER" id="PTHR11601:SF34">
    <property type="entry name" value="CYSTEINE DESULFURASE"/>
    <property type="match status" value="1"/>
</dbReference>
<dbReference type="PANTHER" id="PTHR11601">
    <property type="entry name" value="CYSTEINE DESULFURYLASE FAMILY MEMBER"/>
    <property type="match status" value="1"/>
</dbReference>
<dbReference type="Pfam" id="PF00266">
    <property type="entry name" value="Aminotran_5"/>
    <property type="match status" value="1"/>
</dbReference>
<dbReference type="PIRSF" id="PIRSF005572">
    <property type="entry name" value="NifS"/>
    <property type="match status" value="1"/>
</dbReference>
<dbReference type="SUPFAM" id="SSF53383">
    <property type="entry name" value="PLP-dependent transferases"/>
    <property type="match status" value="1"/>
</dbReference>
<dbReference type="PROSITE" id="PS00595">
    <property type="entry name" value="AA_TRANSFER_CLASS_5"/>
    <property type="match status" value="1"/>
</dbReference>
<proteinExistence type="inferred from homology"/>
<feature type="chain" id="PRO_1000133114" description="Cysteine desulfurase IscS">
    <location>
        <begin position="1"/>
        <end position="405"/>
    </location>
</feature>
<feature type="active site" description="Cysteine persulfide intermediate" evidence="1">
    <location>
        <position position="329"/>
    </location>
</feature>
<feature type="binding site" evidence="1">
    <location>
        <position position="156"/>
    </location>
    <ligand>
        <name>pyridoxal 5'-phosphate</name>
        <dbReference type="ChEBI" id="CHEBI:597326"/>
    </ligand>
</feature>
<feature type="binding site" description="via persulfide group" evidence="1">
    <location>
        <position position="329"/>
    </location>
    <ligand>
        <name>[2Fe-2S] cluster</name>
        <dbReference type="ChEBI" id="CHEBI:190135"/>
        <note>ligand shared with IscU</note>
    </ligand>
</feature>
<feature type="modified residue" description="N6-(pyridoxal phosphate)lysine" evidence="1">
    <location>
        <position position="207"/>
    </location>
</feature>
<name>ISCS_DECAR</name>